<protein>
    <recommendedName>
        <fullName evidence="1">Isoleucine--tRNA ligase</fullName>
        <ecNumber evidence="1">6.1.1.5</ecNumber>
    </recommendedName>
    <alternativeName>
        <fullName evidence="1">Isoleucyl-tRNA synthetase</fullName>
        <shortName evidence="1">IleRS</shortName>
    </alternativeName>
</protein>
<accession>A5IFX5</accession>
<name>SYI_LEGPC</name>
<comment type="function">
    <text evidence="1">Catalyzes the attachment of isoleucine to tRNA(Ile). As IleRS can inadvertently accommodate and process structurally similar amino acids such as valine, to avoid such errors it has two additional distinct tRNA(Ile)-dependent editing activities. One activity is designated as 'pretransfer' editing and involves the hydrolysis of activated Val-AMP. The other activity is designated 'posttransfer' editing and involves deacylation of mischarged Val-tRNA(Ile).</text>
</comment>
<comment type="catalytic activity">
    <reaction evidence="1">
        <text>tRNA(Ile) + L-isoleucine + ATP = L-isoleucyl-tRNA(Ile) + AMP + diphosphate</text>
        <dbReference type="Rhea" id="RHEA:11060"/>
        <dbReference type="Rhea" id="RHEA-COMP:9666"/>
        <dbReference type="Rhea" id="RHEA-COMP:9695"/>
        <dbReference type="ChEBI" id="CHEBI:30616"/>
        <dbReference type="ChEBI" id="CHEBI:33019"/>
        <dbReference type="ChEBI" id="CHEBI:58045"/>
        <dbReference type="ChEBI" id="CHEBI:78442"/>
        <dbReference type="ChEBI" id="CHEBI:78528"/>
        <dbReference type="ChEBI" id="CHEBI:456215"/>
        <dbReference type="EC" id="6.1.1.5"/>
    </reaction>
</comment>
<comment type="cofactor">
    <cofactor evidence="1">
        <name>Zn(2+)</name>
        <dbReference type="ChEBI" id="CHEBI:29105"/>
    </cofactor>
    <text evidence="1">Binds 1 zinc ion per subunit.</text>
</comment>
<comment type="subunit">
    <text evidence="1">Monomer.</text>
</comment>
<comment type="subcellular location">
    <subcellularLocation>
        <location evidence="1">Cytoplasm</location>
    </subcellularLocation>
</comment>
<comment type="domain">
    <text evidence="1">IleRS has two distinct active sites: one for aminoacylation and one for editing. The misactivated valine is translocated from the active site to the editing site, which sterically excludes the correctly activated isoleucine. The single editing site contains two valyl binding pockets, one specific for each substrate (Val-AMP or Val-tRNA(Ile)).</text>
</comment>
<comment type="similarity">
    <text evidence="1">Belongs to the class-I aminoacyl-tRNA synthetase family. IleS type 1 subfamily.</text>
</comment>
<gene>
    <name evidence="1" type="primary">ileS</name>
    <name type="ordered locus">LPC_2353</name>
</gene>
<keyword id="KW-0030">Aminoacyl-tRNA synthetase</keyword>
<keyword id="KW-0067">ATP-binding</keyword>
<keyword id="KW-0963">Cytoplasm</keyword>
<keyword id="KW-0436">Ligase</keyword>
<keyword id="KW-0479">Metal-binding</keyword>
<keyword id="KW-0547">Nucleotide-binding</keyword>
<keyword id="KW-0648">Protein biosynthesis</keyword>
<keyword id="KW-0862">Zinc</keyword>
<organism>
    <name type="scientific">Legionella pneumophila (strain Corby)</name>
    <dbReference type="NCBI Taxonomy" id="400673"/>
    <lineage>
        <taxon>Bacteria</taxon>
        <taxon>Pseudomonadati</taxon>
        <taxon>Pseudomonadota</taxon>
        <taxon>Gammaproteobacteria</taxon>
        <taxon>Legionellales</taxon>
        <taxon>Legionellaceae</taxon>
        <taxon>Legionella</taxon>
    </lineage>
</organism>
<dbReference type="EC" id="6.1.1.5" evidence="1"/>
<dbReference type="EMBL" id="CP000675">
    <property type="protein sequence ID" value="ABQ56275.1"/>
    <property type="molecule type" value="Genomic_DNA"/>
</dbReference>
<dbReference type="RefSeq" id="WP_011946026.1">
    <property type="nucleotide sequence ID" value="NC_009494.2"/>
</dbReference>
<dbReference type="SMR" id="A5IFX5"/>
<dbReference type="KEGG" id="lpc:LPC_2353"/>
<dbReference type="HOGENOM" id="CLU_001493_7_1_6"/>
<dbReference type="GO" id="GO:0005829">
    <property type="term" value="C:cytosol"/>
    <property type="evidence" value="ECO:0007669"/>
    <property type="project" value="TreeGrafter"/>
</dbReference>
<dbReference type="GO" id="GO:0002161">
    <property type="term" value="F:aminoacyl-tRNA deacylase activity"/>
    <property type="evidence" value="ECO:0007669"/>
    <property type="project" value="InterPro"/>
</dbReference>
<dbReference type="GO" id="GO:0005524">
    <property type="term" value="F:ATP binding"/>
    <property type="evidence" value="ECO:0007669"/>
    <property type="project" value="UniProtKB-UniRule"/>
</dbReference>
<dbReference type="GO" id="GO:0004822">
    <property type="term" value="F:isoleucine-tRNA ligase activity"/>
    <property type="evidence" value="ECO:0007669"/>
    <property type="project" value="UniProtKB-UniRule"/>
</dbReference>
<dbReference type="GO" id="GO:0000049">
    <property type="term" value="F:tRNA binding"/>
    <property type="evidence" value="ECO:0007669"/>
    <property type="project" value="InterPro"/>
</dbReference>
<dbReference type="GO" id="GO:0008270">
    <property type="term" value="F:zinc ion binding"/>
    <property type="evidence" value="ECO:0007669"/>
    <property type="project" value="UniProtKB-UniRule"/>
</dbReference>
<dbReference type="GO" id="GO:0006428">
    <property type="term" value="P:isoleucyl-tRNA aminoacylation"/>
    <property type="evidence" value="ECO:0007669"/>
    <property type="project" value="UniProtKB-UniRule"/>
</dbReference>
<dbReference type="CDD" id="cd07960">
    <property type="entry name" value="Anticodon_Ia_Ile_BEm"/>
    <property type="match status" value="1"/>
</dbReference>
<dbReference type="CDD" id="cd00818">
    <property type="entry name" value="IleRS_core"/>
    <property type="match status" value="1"/>
</dbReference>
<dbReference type="FunFam" id="1.10.730.20:FF:000001">
    <property type="entry name" value="Isoleucine--tRNA ligase"/>
    <property type="match status" value="1"/>
</dbReference>
<dbReference type="FunFam" id="3.40.50.620:FF:000042">
    <property type="entry name" value="Isoleucine--tRNA ligase"/>
    <property type="match status" value="1"/>
</dbReference>
<dbReference type="FunFam" id="3.40.50.620:FF:000048">
    <property type="entry name" value="Isoleucine--tRNA ligase"/>
    <property type="match status" value="1"/>
</dbReference>
<dbReference type="Gene3D" id="1.10.730.20">
    <property type="match status" value="1"/>
</dbReference>
<dbReference type="Gene3D" id="3.40.50.620">
    <property type="entry name" value="HUPs"/>
    <property type="match status" value="2"/>
</dbReference>
<dbReference type="Gene3D" id="1.10.10.830">
    <property type="entry name" value="Ile-tRNA synthetase CP2 domain-like"/>
    <property type="match status" value="1"/>
</dbReference>
<dbReference type="Gene3D" id="3.90.740.10">
    <property type="entry name" value="Valyl/Leucyl/Isoleucyl-tRNA synthetase, editing domain"/>
    <property type="match status" value="1"/>
</dbReference>
<dbReference type="HAMAP" id="MF_02002">
    <property type="entry name" value="Ile_tRNA_synth_type1"/>
    <property type="match status" value="1"/>
</dbReference>
<dbReference type="InterPro" id="IPR001412">
    <property type="entry name" value="aa-tRNA-synth_I_CS"/>
</dbReference>
<dbReference type="InterPro" id="IPR002300">
    <property type="entry name" value="aa-tRNA-synth_Ia"/>
</dbReference>
<dbReference type="InterPro" id="IPR033708">
    <property type="entry name" value="Anticodon_Ile_BEm"/>
</dbReference>
<dbReference type="InterPro" id="IPR002301">
    <property type="entry name" value="Ile-tRNA-ligase"/>
</dbReference>
<dbReference type="InterPro" id="IPR023585">
    <property type="entry name" value="Ile-tRNA-ligase_type1"/>
</dbReference>
<dbReference type="InterPro" id="IPR050081">
    <property type="entry name" value="Ile-tRNA_ligase"/>
</dbReference>
<dbReference type="InterPro" id="IPR013155">
    <property type="entry name" value="M/V/L/I-tRNA-synth_anticd-bd"/>
</dbReference>
<dbReference type="InterPro" id="IPR014729">
    <property type="entry name" value="Rossmann-like_a/b/a_fold"/>
</dbReference>
<dbReference type="InterPro" id="IPR009080">
    <property type="entry name" value="tRNAsynth_Ia_anticodon-bd"/>
</dbReference>
<dbReference type="InterPro" id="IPR009008">
    <property type="entry name" value="Val/Leu/Ile-tRNA-synth_edit"/>
</dbReference>
<dbReference type="InterPro" id="IPR010663">
    <property type="entry name" value="Znf_FPG/IleRS"/>
</dbReference>
<dbReference type="NCBIfam" id="TIGR00392">
    <property type="entry name" value="ileS"/>
    <property type="match status" value="1"/>
</dbReference>
<dbReference type="PANTHER" id="PTHR42765:SF1">
    <property type="entry name" value="ISOLEUCINE--TRNA LIGASE, MITOCHONDRIAL"/>
    <property type="match status" value="1"/>
</dbReference>
<dbReference type="PANTHER" id="PTHR42765">
    <property type="entry name" value="SOLEUCYL-TRNA SYNTHETASE"/>
    <property type="match status" value="1"/>
</dbReference>
<dbReference type="Pfam" id="PF08264">
    <property type="entry name" value="Anticodon_1"/>
    <property type="match status" value="1"/>
</dbReference>
<dbReference type="Pfam" id="PF00133">
    <property type="entry name" value="tRNA-synt_1"/>
    <property type="match status" value="1"/>
</dbReference>
<dbReference type="Pfam" id="PF06827">
    <property type="entry name" value="zf-FPG_IleRS"/>
    <property type="match status" value="1"/>
</dbReference>
<dbReference type="PRINTS" id="PR00984">
    <property type="entry name" value="TRNASYNTHILE"/>
</dbReference>
<dbReference type="SUPFAM" id="SSF47323">
    <property type="entry name" value="Anticodon-binding domain of a subclass of class I aminoacyl-tRNA synthetases"/>
    <property type="match status" value="1"/>
</dbReference>
<dbReference type="SUPFAM" id="SSF52374">
    <property type="entry name" value="Nucleotidylyl transferase"/>
    <property type="match status" value="1"/>
</dbReference>
<dbReference type="SUPFAM" id="SSF50677">
    <property type="entry name" value="ValRS/IleRS/LeuRS editing domain"/>
    <property type="match status" value="1"/>
</dbReference>
<dbReference type="PROSITE" id="PS00178">
    <property type="entry name" value="AA_TRNA_LIGASE_I"/>
    <property type="match status" value="1"/>
</dbReference>
<proteinExistence type="inferred from homology"/>
<evidence type="ECO:0000255" key="1">
    <source>
        <dbReference type="HAMAP-Rule" id="MF_02002"/>
    </source>
</evidence>
<sequence length="931" mass="105933">MAEYKDTLNLPNTSFPMKASLSVREPEMLADWQAKGIYQKIRKARVGSKRFILHDGPPYANGHLHCGHALNKILKDIIIKSKTFSGFDAPFVPGWDCHGLPIELNVEKKVGKAGSKISPREFRAKCREYAASQIDIQRDEFQRLGVLGDWYNPYVTMDYHYEANIVRALGLMIKNGHLQQGFKPVHWCIDCGSALAEAEVDYEDKTSPSIDVAFSAVNPSEFLNCFETQPAVKPLILPIWTTTPWTLPANEAVCLHPEIDYALIDAGNSYYIVATDLVESVMARYGISHYKTSGFAKGRVFEHFKLQHPFYKRQVPVVLAEHVTTESGTGCVHTAPAHGPDDYLVGQSYQLPLINPVMANGCFAENVELFAGISVLKANETILAVLSERNVLLASESIRHSYPHCWRHKSPMIFLATPQWFISMDKSNLRQAIINEIDKVNWVPDWGKARISNMVENRPDWCISRQRSWGTPMPLFVHKTTRELHPDTLELIERVAVMIEKSGIDAWFDLDSSELLGDDAKHYDKITDTMDVWLDSGISHYSVLKHNNDLDFPADVYFEGSDQHRGWFNSSLTTAVAMYGVAPYKTVLTHGYTVDAEGKKLSKSKGNYVALDKLVNQHGADILRLWVASTDYRHEVSISEEIIKRNADAYRRIRNTARFLLANLFDFNPASDCIDAKELLELDRWALKRCQLLQEEIITAYENYHFHLIYQKIHNFCAVDMGSFYLDLIKDRQYTTAKDSIARRSCQTAMYHMVKAFTIWLAPILSFTAEEIWQTIPGNNSESIFIEHWYNAWPTIDAVNMEDWEQLHIVRDEVNKALEETRQRGEIGSALAAEVTVYADAKVLPKLTRLGEELRFLFITSEAKACPISQSPKGLAVTDCGVSIQVTASVHEKCARCWHRREDVGQNQEHPELCLRCVGNISRYHEERLYI</sequence>
<reference key="1">
    <citation type="submission" date="2006-11" db="EMBL/GenBank/DDBJ databases">
        <title>Identification and characterization of a new conjugation/ type IVA secretion system (trb/tra) of L. pneumophila Corby localized on a mobile genomic island.</title>
        <authorList>
            <person name="Gloeckner G."/>
            <person name="Albert-Weissenberger C."/>
            <person name="Weinmann E."/>
            <person name="Jacobi S."/>
            <person name="Schunder E."/>
            <person name="Steinert M."/>
            <person name="Buchrieser C."/>
            <person name="Hacker J."/>
            <person name="Heuner K."/>
        </authorList>
    </citation>
    <scope>NUCLEOTIDE SEQUENCE [LARGE SCALE GENOMIC DNA]</scope>
    <source>
        <strain>Corby</strain>
    </source>
</reference>
<feature type="chain" id="PRO_1000022087" description="Isoleucine--tRNA ligase">
    <location>
        <begin position="1"/>
        <end position="931"/>
    </location>
</feature>
<feature type="short sequence motif" description="'HIGH' region">
    <location>
        <begin position="58"/>
        <end position="68"/>
    </location>
</feature>
<feature type="short sequence motif" description="'KMSKS' region">
    <location>
        <begin position="600"/>
        <end position="604"/>
    </location>
</feature>
<feature type="binding site" evidence="1">
    <location>
        <position position="559"/>
    </location>
    <ligand>
        <name>L-isoleucyl-5'-AMP</name>
        <dbReference type="ChEBI" id="CHEBI:178002"/>
    </ligand>
</feature>
<feature type="binding site" evidence="1">
    <location>
        <position position="603"/>
    </location>
    <ligand>
        <name>ATP</name>
        <dbReference type="ChEBI" id="CHEBI:30616"/>
    </ligand>
</feature>
<feature type="binding site" evidence="1">
    <location>
        <position position="894"/>
    </location>
    <ligand>
        <name>Zn(2+)</name>
        <dbReference type="ChEBI" id="CHEBI:29105"/>
    </ligand>
</feature>
<feature type="binding site" evidence="1">
    <location>
        <position position="897"/>
    </location>
    <ligand>
        <name>Zn(2+)</name>
        <dbReference type="ChEBI" id="CHEBI:29105"/>
    </ligand>
</feature>
<feature type="binding site" evidence="1">
    <location>
        <position position="914"/>
    </location>
    <ligand>
        <name>Zn(2+)</name>
        <dbReference type="ChEBI" id="CHEBI:29105"/>
    </ligand>
</feature>
<feature type="binding site" evidence="1">
    <location>
        <position position="917"/>
    </location>
    <ligand>
        <name>Zn(2+)</name>
        <dbReference type="ChEBI" id="CHEBI:29105"/>
    </ligand>
</feature>